<keyword id="KW-0028">Amino-acid biosynthesis</keyword>
<keyword id="KW-0055">Arginine biosynthesis</keyword>
<keyword id="KW-0067">ATP-binding</keyword>
<keyword id="KW-0963">Cytoplasm</keyword>
<keyword id="KW-0436">Ligase</keyword>
<keyword id="KW-0547">Nucleotide-binding</keyword>
<comment type="catalytic activity">
    <reaction evidence="1">
        <text>L-citrulline + L-aspartate + ATP = 2-(N(omega)-L-arginino)succinate + AMP + diphosphate + H(+)</text>
        <dbReference type="Rhea" id="RHEA:10932"/>
        <dbReference type="ChEBI" id="CHEBI:15378"/>
        <dbReference type="ChEBI" id="CHEBI:29991"/>
        <dbReference type="ChEBI" id="CHEBI:30616"/>
        <dbReference type="ChEBI" id="CHEBI:33019"/>
        <dbReference type="ChEBI" id="CHEBI:57472"/>
        <dbReference type="ChEBI" id="CHEBI:57743"/>
        <dbReference type="ChEBI" id="CHEBI:456215"/>
        <dbReference type="EC" id="6.3.4.5"/>
    </reaction>
</comment>
<comment type="pathway">
    <text evidence="1">Amino-acid biosynthesis; L-arginine biosynthesis; L-arginine from L-ornithine and carbamoyl phosphate: step 2/3.</text>
</comment>
<comment type="subunit">
    <text evidence="1">Homotetramer.</text>
</comment>
<comment type="subcellular location">
    <subcellularLocation>
        <location evidence="1">Cytoplasm</location>
    </subcellularLocation>
</comment>
<comment type="similarity">
    <text evidence="1">Belongs to the argininosuccinate synthase family. Type 1 subfamily.</text>
</comment>
<organism>
    <name type="scientific">Geobacter sp. (strain M21)</name>
    <dbReference type="NCBI Taxonomy" id="443144"/>
    <lineage>
        <taxon>Bacteria</taxon>
        <taxon>Pseudomonadati</taxon>
        <taxon>Thermodesulfobacteriota</taxon>
        <taxon>Desulfuromonadia</taxon>
        <taxon>Geobacterales</taxon>
        <taxon>Geobacteraceae</taxon>
        <taxon>Geobacter</taxon>
    </lineage>
</organism>
<protein>
    <recommendedName>
        <fullName evidence="1">Argininosuccinate synthase</fullName>
        <ecNumber evidence="1">6.3.4.5</ecNumber>
    </recommendedName>
    <alternativeName>
        <fullName evidence="1">Citrulline--aspartate ligase</fullName>
    </alternativeName>
</protein>
<reference key="1">
    <citation type="submission" date="2009-07" db="EMBL/GenBank/DDBJ databases">
        <title>Complete sequence of Geobacter sp. M21.</title>
        <authorList>
            <consortium name="US DOE Joint Genome Institute"/>
            <person name="Lucas S."/>
            <person name="Copeland A."/>
            <person name="Lapidus A."/>
            <person name="Glavina del Rio T."/>
            <person name="Dalin E."/>
            <person name="Tice H."/>
            <person name="Bruce D."/>
            <person name="Goodwin L."/>
            <person name="Pitluck S."/>
            <person name="Saunders E."/>
            <person name="Brettin T."/>
            <person name="Detter J.C."/>
            <person name="Han C."/>
            <person name="Larimer F."/>
            <person name="Land M."/>
            <person name="Hauser L."/>
            <person name="Kyrpides N."/>
            <person name="Ovchinnikova G."/>
            <person name="Lovley D."/>
        </authorList>
    </citation>
    <scope>NUCLEOTIDE SEQUENCE [LARGE SCALE GENOMIC DNA]</scope>
    <source>
        <strain>M21</strain>
    </source>
</reference>
<accession>C6E6Y6</accession>
<dbReference type="EC" id="6.3.4.5" evidence="1"/>
<dbReference type="EMBL" id="CP001661">
    <property type="protein sequence ID" value="ACT19764.1"/>
    <property type="molecule type" value="Genomic_DNA"/>
</dbReference>
<dbReference type="SMR" id="C6E6Y6"/>
<dbReference type="STRING" id="443144.GM21_3745"/>
<dbReference type="KEGG" id="gem:GM21_3745"/>
<dbReference type="eggNOG" id="COG0137">
    <property type="taxonomic scope" value="Bacteria"/>
</dbReference>
<dbReference type="HOGENOM" id="CLU_032784_4_2_7"/>
<dbReference type="OrthoDB" id="9801641at2"/>
<dbReference type="UniPathway" id="UPA00068">
    <property type="reaction ID" value="UER00113"/>
</dbReference>
<dbReference type="GO" id="GO:0005737">
    <property type="term" value="C:cytoplasm"/>
    <property type="evidence" value="ECO:0007669"/>
    <property type="project" value="UniProtKB-SubCell"/>
</dbReference>
<dbReference type="GO" id="GO:0004055">
    <property type="term" value="F:argininosuccinate synthase activity"/>
    <property type="evidence" value="ECO:0007669"/>
    <property type="project" value="UniProtKB-UniRule"/>
</dbReference>
<dbReference type="GO" id="GO:0005524">
    <property type="term" value="F:ATP binding"/>
    <property type="evidence" value="ECO:0007669"/>
    <property type="project" value="UniProtKB-UniRule"/>
</dbReference>
<dbReference type="GO" id="GO:0000053">
    <property type="term" value="P:argininosuccinate metabolic process"/>
    <property type="evidence" value="ECO:0007669"/>
    <property type="project" value="TreeGrafter"/>
</dbReference>
<dbReference type="GO" id="GO:0006526">
    <property type="term" value="P:L-arginine biosynthetic process"/>
    <property type="evidence" value="ECO:0007669"/>
    <property type="project" value="UniProtKB-UniRule"/>
</dbReference>
<dbReference type="GO" id="GO:0000050">
    <property type="term" value="P:urea cycle"/>
    <property type="evidence" value="ECO:0007669"/>
    <property type="project" value="TreeGrafter"/>
</dbReference>
<dbReference type="CDD" id="cd01999">
    <property type="entry name" value="ASS"/>
    <property type="match status" value="1"/>
</dbReference>
<dbReference type="FunFam" id="3.40.50.620:FF:000019">
    <property type="entry name" value="Argininosuccinate synthase"/>
    <property type="match status" value="1"/>
</dbReference>
<dbReference type="FunFam" id="3.90.1260.10:FF:000007">
    <property type="entry name" value="Argininosuccinate synthase"/>
    <property type="match status" value="1"/>
</dbReference>
<dbReference type="Gene3D" id="3.90.1260.10">
    <property type="entry name" value="Argininosuccinate synthetase, chain A, domain 2"/>
    <property type="match status" value="1"/>
</dbReference>
<dbReference type="Gene3D" id="3.40.50.620">
    <property type="entry name" value="HUPs"/>
    <property type="match status" value="1"/>
</dbReference>
<dbReference type="Gene3D" id="1.20.5.470">
    <property type="entry name" value="Single helix bin"/>
    <property type="match status" value="1"/>
</dbReference>
<dbReference type="HAMAP" id="MF_00005">
    <property type="entry name" value="Arg_succ_synth_type1"/>
    <property type="match status" value="1"/>
</dbReference>
<dbReference type="InterPro" id="IPR048268">
    <property type="entry name" value="Arginosuc_syn_C"/>
</dbReference>
<dbReference type="InterPro" id="IPR048267">
    <property type="entry name" value="Arginosuc_syn_N"/>
</dbReference>
<dbReference type="InterPro" id="IPR001518">
    <property type="entry name" value="Arginosuc_synth"/>
</dbReference>
<dbReference type="InterPro" id="IPR018223">
    <property type="entry name" value="Arginosuc_synth_CS"/>
</dbReference>
<dbReference type="InterPro" id="IPR023434">
    <property type="entry name" value="Arginosuc_synth_type_1_subfam"/>
</dbReference>
<dbReference type="InterPro" id="IPR024074">
    <property type="entry name" value="AS_cat/multimer_dom_body"/>
</dbReference>
<dbReference type="InterPro" id="IPR014729">
    <property type="entry name" value="Rossmann-like_a/b/a_fold"/>
</dbReference>
<dbReference type="NCBIfam" id="TIGR00032">
    <property type="entry name" value="argG"/>
    <property type="match status" value="1"/>
</dbReference>
<dbReference type="NCBIfam" id="NF001770">
    <property type="entry name" value="PRK00509.1"/>
    <property type="match status" value="1"/>
</dbReference>
<dbReference type="PANTHER" id="PTHR11587">
    <property type="entry name" value="ARGININOSUCCINATE SYNTHASE"/>
    <property type="match status" value="1"/>
</dbReference>
<dbReference type="PANTHER" id="PTHR11587:SF2">
    <property type="entry name" value="ARGININOSUCCINATE SYNTHASE"/>
    <property type="match status" value="1"/>
</dbReference>
<dbReference type="Pfam" id="PF20979">
    <property type="entry name" value="Arginosuc_syn_C"/>
    <property type="match status" value="1"/>
</dbReference>
<dbReference type="Pfam" id="PF00764">
    <property type="entry name" value="Arginosuc_synth"/>
    <property type="match status" value="1"/>
</dbReference>
<dbReference type="SUPFAM" id="SSF52402">
    <property type="entry name" value="Adenine nucleotide alpha hydrolases-like"/>
    <property type="match status" value="1"/>
</dbReference>
<dbReference type="SUPFAM" id="SSF69864">
    <property type="entry name" value="Argininosuccinate synthetase, C-terminal domain"/>
    <property type="match status" value="1"/>
</dbReference>
<dbReference type="PROSITE" id="PS00564">
    <property type="entry name" value="ARGININOSUCCIN_SYN_1"/>
    <property type="match status" value="1"/>
</dbReference>
<dbReference type="PROSITE" id="PS00565">
    <property type="entry name" value="ARGININOSUCCIN_SYN_2"/>
    <property type="match status" value="1"/>
</dbReference>
<sequence length="406" mass="46165">MAKKEVKKIVLAYSGGLDTSIILKWLKNEYGCEVVTFSADLGQGDELEPVREKAFKTGADKVYIDDLREEFVRDFVFPMFRANAIYEGSYLLGTSIARPLIAKRQMEIAQIEGCDAVSHGATGKGNDQVRFELAYYHFNPGITVVAPWREWKLNSRQALINYAKRNDIPIPITKKRPWSSDRNLLHISFEGGILEDTWLEPPENMFVLTKPPEKAPNKPQYVEIEFEKGNAVAVDGVRMSPAELLAHLNTIGGEHGIGRVDLLENRSVGMKSRGVYETPGGTILREAHMAVEQITMDREVMHLRDSLIPRYAEMIYNGYWFSPEREMMQCMIDESQKTVNGVARLKLYKGHCRTVGRKSESDSLFNLDFATFEKDQVYNQADAEGFIKLNSLRLRIRSLMLANKNK</sequence>
<proteinExistence type="inferred from homology"/>
<name>ASSY_GEOSM</name>
<gene>
    <name evidence="1" type="primary">argG</name>
    <name type="ordered locus">GM21_3745</name>
</gene>
<evidence type="ECO:0000255" key="1">
    <source>
        <dbReference type="HAMAP-Rule" id="MF_00005"/>
    </source>
</evidence>
<feature type="chain" id="PRO_1000201683" description="Argininosuccinate synthase">
    <location>
        <begin position="1"/>
        <end position="406"/>
    </location>
</feature>
<feature type="binding site" evidence="1">
    <location>
        <begin position="12"/>
        <end position="20"/>
    </location>
    <ligand>
        <name>ATP</name>
        <dbReference type="ChEBI" id="CHEBI:30616"/>
    </ligand>
</feature>
<feature type="binding site" evidence="1">
    <location>
        <position position="39"/>
    </location>
    <ligand>
        <name>ATP</name>
        <dbReference type="ChEBI" id="CHEBI:30616"/>
    </ligand>
</feature>
<feature type="binding site" evidence="1">
    <location>
        <position position="90"/>
    </location>
    <ligand>
        <name>L-citrulline</name>
        <dbReference type="ChEBI" id="CHEBI:57743"/>
    </ligand>
</feature>
<feature type="binding site" evidence="1">
    <location>
        <position position="95"/>
    </location>
    <ligand>
        <name>L-citrulline</name>
        <dbReference type="ChEBI" id="CHEBI:57743"/>
    </ligand>
</feature>
<feature type="binding site" evidence="1">
    <location>
        <position position="120"/>
    </location>
    <ligand>
        <name>ATP</name>
        <dbReference type="ChEBI" id="CHEBI:30616"/>
    </ligand>
</feature>
<feature type="binding site" evidence="1">
    <location>
        <position position="122"/>
    </location>
    <ligand>
        <name>L-aspartate</name>
        <dbReference type="ChEBI" id="CHEBI:29991"/>
    </ligand>
</feature>
<feature type="binding site" evidence="1">
    <location>
        <position position="126"/>
    </location>
    <ligand>
        <name>L-aspartate</name>
        <dbReference type="ChEBI" id="CHEBI:29991"/>
    </ligand>
</feature>
<feature type="binding site" evidence="1">
    <location>
        <position position="126"/>
    </location>
    <ligand>
        <name>L-citrulline</name>
        <dbReference type="ChEBI" id="CHEBI:57743"/>
    </ligand>
</feature>
<feature type="binding site" evidence="1">
    <location>
        <position position="127"/>
    </location>
    <ligand>
        <name>L-aspartate</name>
        <dbReference type="ChEBI" id="CHEBI:29991"/>
    </ligand>
</feature>
<feature type="binding site" evidence="1">
    <location>
        <position position="130"/>
    </location>
    <ligand>
        <name>L-citrulline</name>
        <dbReference type="ChEBI" id="CHEBI:57743"/>
    </ligand>
</feature>
<feature type="binding site" evidence="1">
    <location>
        <position position="179"/>
    </location>
    <ligand>
        <name>L-citrulline</name>
        <dbReference type="ChEBI" id="CHEBI:57743"/>
    </ligand>
</feature>
<feature type="binding site" evidence="1">
    <location>
        <position position="188"/>
    </location>
    <ligand>
        <name>L-citrulline</name>
        <dbReference type="ChEBI" id="CHEBI:57743"/>
    </ligand>
</feature>
<feature type="binding site" evidence="1">
    <location>
        <position position="264"/>
    </location>
    <ligand>
        <name>L-citrulline</name>
        <dbReference type="ChEBI" id="CHEBI:57743"/>
    </ligand>
</feature>
<feature type="binding site" evidence="1">
    <location>
        <position position="276"/>
    </location>
    <ligand>
        <name>L-citrulline</name>
        <dbReference type="ChEBI" id="CHEBI:57743"/>
    </ligand>
</feature>